<name>FER_SCEQU</name>
<feature type="chain" id="PRO_0000189363" description="Ferredoxin">
    <location>
        <begin position="1"/>
        <end position="96"/>
    </location>
</feature>
<feature type="domain" description="2Fe-2S ferredoxin-type" evidence="1">
    <location>
        <begin position="3"/>
        <end position="93"/>
    </location>
</feature>
<feature type="binding site" evidence="1">
    <location>
        <position position="39"/>
    </location>
    <ligand>
        <name>[2Fe-2S] cluster</name>
        <dbReference type="ChEBI" id="CHEBI:190135"/>
    </ligand>
</feature>
<feature type="binding site" evidence="1">
    <location>
        <position position="44"/>
    </location>
    <ligand>
        <name>[2Fe-2S] cluster</name>
        <dbReference type="ChEBI" id="CHEBI:190135"/>
    </ligand>
</feature>
<feature type="binding site" evidence="1">
    <location>
        <position position="47"/>
    </location>
    <ligand>
        <name>[2Fe-2S] cluster</name>
        <dbReference type="ChEBI" id="CHEBI:190135"/>
    </ligand>
</feature>
<feature type="binding site" evidence="1">
    <location>
        <position position="77"/>
    </location>
    <ligand>
        <name>[2Fe-2S] cluster</name>
        <dbReference type="ChEBI" id="CHEBI:190135"/>
    </ligand>
</feature>
<dbReference type="PIR" id="A00242">
    <property type="entry name" value="FESC"/>
</dbReference>
<dbReference type="SMR" id="P00238"/>
<dbReference type="GO" id="GO:0009507">
    <property type="term" value="C:chloroplast"/>
    <property type="evidence" value="ECO:0007669"/>
    <property type="project" value="UniProtKB-SubCell"/>
</dbReference>
<dbReference type="GO" id="GO:0051537">
    <property type="term" value="F:2 iron, 2 sulfur cluster binding"/>
    <property type="evidence" value="ECO:0007669"/>
    <property type="project" value="UniProtKB-KW"/>
</dbReference>
<dbReference type="GO" id="GO:0009055">
    <property type="term" value="F:electron transfer activity"/>
    <property type="evidence" value="ECO:0007669"/>
    <property type="project" value="InterPro"/>
</dbReference>
<dbReference type="GO" id="GO:0046872">
    <property type="term" value="F:metal ion binding"/>
    <property type="evidence" value="ECO:0007669"/>
    <property type="project" value="UniProtKB-KW"/>
</dbReference>
<dbReference type="GO" id="GO:0022900">
    <property type="term" value="P:electron transport chain"/>
    <property type="evidence" value="ECO:0007669"/>
    <property type="project" value="InterPro"/>
</dbReference>
<dbReference type="CDD" id="cd00207">
    <property type="entry name" value="fer2"/>
    <property type="match status" value="1"/>
</dbReference>
<dbReference type="FunFam" id="3.10.20.30:FF:000014">
    <property type="entry name" value="Ferredoxin"/>
    <property type="match status" value="1"/>
</dbReference>
<dbReference type="Gene3D" id="3.10.20.30">
    <property type="match status" value="1"/>
</dbReference>
<dbReference type="InterPro" id="IPR036010">
    <property type="entry name" value="2Fe-2S_ferredoxin-like_sf"/>
</dbReference>
<dbReference type="InterPro" id="IPR001041">
    <property type="entry name" value="2Fe-2S_ferredoxin-type"/>
</dbReference>
<dbReference type="InterPro" id="IPR006058">
    <property type="entry name" value="2Fe2S_fd_BS"/>
</dbReference>
<dbReference type="InterPro" id="IPR012675">
    <property type="entry name" value="Beta-grasp_dom_sf"/>
</dbReference>
<dbReference type="InterPro" id="IPR010241">
    <property type="entry name" value="Fd_pln"/>
</dbReference>
<dbReference type="NCBIfam" id="TIGR02008">
    <property type="entry name" value="fdx_plant"/>
    <property type="match status" value="1"/>
</dbReference>
<dbReference type="PANTHER" id="PTHR43112">
    <property type="entry name" value="FERREDOXIN"/>
    <property type="match status" value="1"/>
</dbReference>
<dbReference type="PANTHER" id="PTHR43112:SF3">
    <property type="entry name" value="FERREDOXIN-2, CHLOROPLASTIC"/>
    <property type="match status" value="1"/>
</dbReference>
<dbReference type="Pfam" id="PF00111">
    <property type="entry name" value="Fer2"/>
    <property type="match status" value="1"/>
</dbReference>
<dbReference type="SUPFAM" id="SSF54292">
    <property type="entry name" value="2Fe-2S ferredoxin-like"/>
    <property type="match status" value="1"/>
</dbReference>
<dbReference type="PROSITE" id="PS00197">
    <property type="entry name" value="2FE2S_FER_1"/>
    <property type="match status" value="1"/>
</dbReference>
<dbReference type="PROSITE" id="PS51085">
    <property type="entry name" value="2FE2S_FER_2"/>
    <property type="match status" value="1"/>
</dbReference>
<reference key="1">
    <citation type="journal article" date="1969" name="J. Biol. Chem.">
        <title>The amino acid sequence of Scenedesmus Ferredoxin.</title>
        <authorList>
            <person name="Sugeno K."/>
            <person name="Matsubara H."/>
        </authorList>
    </citation>
    <scope>PROTEIN SEQUENCE</scope>
</reference>
<protein>
    <recommendedName>
        <fullName>Ferredoxin</fullName>
    </recommendedName>
</protein>
<sequence length="96" mass="10170">ATYKVTLKTPSGDQTIECPDDTYILDAAEEAGLDLPYSCRAGACSSCAGKVEAGTVDQSDQSFLDDSQMDGGFVLTCVAYPTSDCTIATHKEEDLF</sequence>
<proteinExistence type="evidence at protein level"/>
<comment type="function">
    <text>Ferredoxins are iron-sulfur proteins that transfer electrons in a wide variety of metabolic reactions.</text>
</comment>
<comment type="cofactor">
    <cofactor>
        <name>[2Fe-2S] cluster</name>
        <dbReference type="ChEBI" id="CHEBI:190135"/>
    </cofactor>
    <text>Binds 1 [2Fe-2S] cluster.</text>
</comment>
<comment type="subcellular location">
    <subcellularLocation>
        <location>Plastid</location>
        <location>Chloroplast</location>
    </subcellularLocation>
</comment>
<comment type="similarity">
    <text evidence="2">Belongs to the 2Fe2S plant-type ferredoxin family.</text>
</comment>
<keyword id="KW-0001">2Fe-2S</keyword>
<keyword id="KW-0150">Chloroplast</keyword>
<keyword id="KW-0903">Direct protein sequencing</keyword>
<keyword id="KW-0249">Electron transport</keyword>
<keyword id="KW-0408">Iron</keyword>
<keyword id="KW-0411">Iron-sulfur</keyword>
<keyword id="KW-0479">Metal-binding</keyword>
<keyword id="KW-0934">Plastid</keyword>
<keyword id="KW-0813">Transport</keyword>
<organism>
    <name type="scientific">Scenedesmus quadricauda</name>
    <name type="common">Green alga</name>
    <name type="synonym">Achnanthes quadricauda</name>
    <dbReference type="NCBI Taxonomy" id="3089"/>
    <lineage>
        <taxon>Eukaryota</taxon>
        <taxon>Viridiplantae</taxon>
        <taxon>Chlorophyta</taxon>
        <taxon>core chlorophytes</taxon>
        <taxon>Chlorophyceae</taxon>
        <taxon>CS clade</taxon>
        <taxon>Sphaeropleales</taxon>
        <taxon>Scenedesmaceae</taxon>
        <taxon>Scenedesmus</taxon>
    </lineage>
</organism>
<evidence type="ECO:0000255" key="1">
    <source>
        <dbReference type="PROSITE-ProRule" id="PRU00465"/>
    </source>
</evidence>
<evidence type="ECO:0000305" key="2"/>
<accession>P00238</accession>